<name>DSBE_PSEAE</name>
<evidence type="ECO:0000250" key="1"/>
<evidence type="ECO:0000255" key="2"/>
<evidence type="ECO:0000255" key="3">
    <source>
        <dbReference type="PROSITE-ProRule" id="PRU00691"/>
    </source>
</evidence>
<evidence type="ECO:0000305" key="4"/>
<evidence type="ECO:0007829" key="5">
    <source>
        <dbReference type="PDB" id="3KH7"/>
    </source>
</evidence>
<organism>
    <name type="scientific">Pseudomonas aeruginosa (strain ATCC 15692 / DSM 22644 / CIP 104116 / JCM 14847 / LMG 12228 / 1C / PRS 101 / PAO1)</name>
    <dbReference type="NCBI Taxonomy" id="208964"/>
    <lineage>
        <taxon>Bacteria</taxon>
        <taxon>Pseudomonadati</taxon>
        <taxon>Pseudomonadota</taxon>
        <taxon>Gammaproteobacteria</taxon>
        <taxon>Pseudomonadales</taxon>
        <taxon>Pseudomonadaceae</taxon>
        <taxon>Pseudomonas</taxon>
    </lineage>
</organism>
<reference key="1">
    <citation type="journal article" date="2000" name="Nature">
        <title>Complete genome sequence of Pseudomonas aeruginosa PAO1, an opportunistic pathogen.</title>
        <authorList>
            <person name="Stover C.K."/>
            <person name="Pham X.-Q.T."/>
            <person name="Erwin A.L."/>
            <person name="Mizoguchi S.D."/>
            <person name="Warrener P."/>
            <person name="Hickey M.J."/>
            <person name="Brinkman F.S.L."/>
            <person name="Hufnagle W.O."/>
            <person name="Kowalik D.J."/>
            <person name="Lagrou M."/>
            <person name="Garber R.L."/>
            <person name="Goltry L."/>
            <person name="Tolentino E."/>
            <person name="Westbrock-Wadman S."/>
            <person name="Yuan Y."/>
            <person name="Brody L.L."/>
            <person name="Coulter S.N."/>
            <person name="Folger K.R."/>
            <person name="Kas A."/>
            <person name="Larbig K."/>
            <person name="Lim R.M."/>
            <person name="Smith K.A."/>
            <person name="Spencer D.H."/>
            <person name="Wong G.K.-S."/>
            <person name="Wu Z."/>
            <person name="Paulsen I.T."/>
            <person name="Reizer J."/>
            <person name="Saier M.H. Jr."/>
            <person name="Hancock R.E.W."/>
            <person name="Lory S."/>
            <person name="Olson M.V."/>
        </authorList>
    </citation>
    <scope>NUCLEOTIDE SEQUENCE [LARGE SCALE GENOMIC DNA]</scope>
    <source>
        <strain>ATCC 15692 / DSM 22644 / CIP 104116 / JCM 14847 / LMG 12228 / 1C / PRS 101 / PAO1</strain>
    </source>
</reference>
<feature type="chain" id="PRO_0000201298" description="Thiol:disulfide interchange protein DsbE">
    <location>
        <begin position="1"/>
        <end position="180"/>
    </location>
</feature>
<feature type="topological domain" description="Cytoplasmic" evidence="2">
    <location>
        <begin position="1"/>
        <end position="4"/>
    </location>
</feature>
<feature type="transmembrane region" description="Helical" evidence="2">
    <location>
        <begin position="5"/>
        <end position="25"/>
    </location>
</feature>
<feature type="topological domain" description="Periplasmic" evidence="2">
    <location>
        <begin position="26"/>
        <end position="180"/>
    </location>
</feature>
<feature type="domain" description="Thioredoxin" evidence="3">
    <location>
        <begin position="34"/>
        <end position="175"/>
    </location>
</feature>
<feature type="disulfide bond" description="Redox-active" evidence="3">
    <location>
        <begin position="74"/>
        <end position="77"/>
    </location>
</feature>
<feature type="helix" evidence="5">
    <location>
        <begin position="28"/>
        <end position="30"/>
    </location>
</feature>
<feature type="turn" evidence="5">
    <location>
        <begin position="32"/>
        <end position="37"/>
    </location>
</feature>
<feature type="strand" evidence="5">
    <location>
        <begin position="44"/>
        <end position="49"/>
    </location>
</feature>
<feature type="strand" evidence="5">
    <location>
        <begin position="53"/>
        <end position="56"/>
    </location>
</feature>
<feature type="helix" evidence="5">
    <location>
        <begin position="57"/>
        <end position="60"/>
    </location>
</feature>
<feature type="strand" evidence="5">
    <location>
        <begin position="65"/>
        <end position="70"/>
    </location>
</feature>
<feature type="helix" evidence="5">
    <location>
        <begin position="75"/>
        <end position="89"/>
    </location>
</feature>
<feature type="strand" evidence="5">
    <location>
        <begin position="93"/>
        <end position="100"/>
    </location>
</feature>
<feature type="helix" evidence="5">
    <location>
        <begin position="103"/>
        <end position="112"/>
    </location>
</feature>
<feature type="strand" evidence="5">
    <location>
        <begin position="118"/>
        <end position="123"/>
    </location>
</feature>
<feature type="helix" evidence="5">
    <location>
        <begin position="127"/>
        <end position="132"/>
    </location>
</feature>
<feature type="strand" evidence="5">
    <location>
        <begin position="139"/>
        <end position="143"/>
    </location>
</feature>
<feature type="strand" evidence="5">
    <location>
        <begin position="148"/>
        <end position="155"/>
    </location>
</feature>
<feature type="helix" evidence="5">
    <location>
        <begin position="159"/>
        <end position="165"/>
    </location>
</feature>
<feature type="helix" evidence="5">
    <location>
        <begin position="167"/>
        <end position="174"/>
    </location>
</feature>
<sequence length="180" mass="20122">MKRAILLLPLGIFLIVAVFLFRGLWLDPSELPSALIGKPFPAFDLPSVQDPARRLTEADLKGKPALVNVWGTWCPSCRVEHPELTRLAEQGVVIYGINYKDDNAAAIKWLNELHNPYLLSISDADGTLGLDLGVYGAPETYLIDKQGIIRHKIVGVVDQKVWREQLAPLYQQLLDEPEAR</sequence>
<protein>
    <recommendedName>
        <fullName>Thiol:disulfide interchange protein DsbE</fullName>
    </recommendedName>
    <alternativeName>
        <fullName>Cytochrome c biogenesis protein CcmG</fullName>
    </alternativeName>
</protein>
<accession>Q9I3N1</accession>
<gene>
    <name type="primary">dsbE</name>
    <name type="synonym">ccmG</name>
    <name type="ordered locus">PA1481</name>
</gene>
<proteinExistence type="evidence at protein level"/>
<comment type="function">
    <text evidence="1">Involved in disulfide bond formation. Catalyzes a late, reductive step in the assembly of periplasmic c-type cytochromes, probably the reduction of disulfide bonds of the apocytochrome c to allow covalent linkage with the heme. Possible subunit of a heme lyase (By similarity).</text>
</comment>
<comment type="subcellular location">
    <subcellularLocation>
        <location evidence="1">Cell inner membrane</location>
        <topology evidence="1">Single-pass membrane protein</topology>
        <orientation evidence="1">Periplasmic side</orientation>
    </subcellularLocation>
</comment>
<comment type="similarity">
    <text evidence="4">Belongs to the thioredoxin family. DsbE subfamily.</text>
</comment>
<dbReference type="EMBL" id="AE004091">
    <property type="protein sequence ID" value="AAG04870.1"/>
    <property type="molecule type" value="Genomic_DNA"/>
</dbReference>
<dbReference type="PIR" id="B83460">
    <property type="entry name" value="B83460"/>
</dbReference>
<dbReference type="RefSeq" id="NP_250172.1">
    <property type="nucleotide sequence ID" value="NC_002516.2"/>
</dbReference>
<dbReference type="RefSeq" id="WP_003083138.1">
    <property type="nucleotide sequence ID" value="NZ_QZGE01000005.1"/>
</dbReference>
<dbReference type="PDB" id="3KH7">
    <property type="method" value="X-ray"/>
    <property type="resolution" value="1.75 A"/>
    <property type="chains" value="A=26-180"/>
</dbReference>
<dbReference type="PDB" id="3KH9">
    <property type="method" value="X-ray"/>
    <property type="resolution" value="2.20 A"/>
    <property type="chains" value="A=26-180"/>
</dbReference>
<dbReference type="PDBsum" id="3KH7"/>
<dbReference type="PDBsum" id="3KH9"/>
<dbReference type="SMR" id="Q9I3N1"/>
<dbReference type="FunCoup" id="Q9I3N1">
    <property type="interactions" value="294"/>
</dbReference>
<dbReference type="STRING" id="208964.PA1481"/>
<dbReference type="PaxDb" id="208964-PA1481"/>
<dbReference type="DNASU" id="881065"/>
<dbReference type="GeneID" id="881065"/>
<dbReference type="KEGG" id="pae:PA1481"/>
<dbReference type="PATRIC" id="fig|208964.12.peg.1532"/>
<dbReference type="PseudoCAP" id="PA1481"/>
<dbReference type="HOGENOM" id="CLU_042529_19_1_6"/>
<dbReference type="InParanoid" id="Q9I3N1"/>
<dbReference type="OrthoDB" id="9799347at2"/>
<dbReference type="PhylomeDB" id="Q9I3N1"/>
<dbReference type="BioCyc" id="PAER208964:G1FZ6-1507-MONOMER"/>
<dbReference type="EvolutionaryTrace" id="Q9I3N1"/>
<dbReference type="Proteomes" id="UP000002438">
    <property type="component" value="Chromosome"/>
</dbReference>
<dbReference type="GO" id="GO:0030288">
    <property type="term" value="C:outer membrane-bounded periplasmic space"/>
    <property type="evidence" value="ECO:0007669"/>
    <property type="project" value="InterPro"/>
</dbReference>
<dbReference type="GO" id="GO:0005886">
    <property type="term" value="C:plasma membrane"/>
    <property type="evidence" value="ECO:0007669"/>
    <property type="project" value="UniProtKB-SubCell"/>
</dbReference>
<dbReference type="GO" id="GO:0015036">
    <property type="term" value="F:disulfide oxidoreductase activity"/>
    <property type="evidence" value="ECO:0007669"/>
    <property type="project" value="InterPro"/>
</dbReference>
<dbReference type="GO" id="GO:0017004">
    <property type="term" value="P:cytochrome complex assembly"/>
    <property type="evidence" value="ECO:0007669"/>
    <property type="project" value="UniProtKB-KW"/>
</dbReference>
<dbReference type="CDD" id="cd03010">
    <property type="entry name" value="TlpA_like_DsbE"/>
    <property type="match status" value="1"/>
</dbReference>
<dbReference type="Gene3D" id="3.40.30.10">
    <property type="entry name" value="Glutaredoxin"/>
    <property type="match status" value="1"/>
</dbReference>
<dbReference type="InterPro" id="IPR004799">
    <property type="entry name" value="Periplasmic_diS_OxRdtase_DsbE"/>
</dbReference>
<dbReference type="InterPro" id="IPR013740">
    <property type="entry name" value="Redoxin"/>
</dbReference>
<dbReference type="InterPro" id="IPR036249">
    <property type="entry name" value="Thioredoxin-like_sf"/>
</dbReference>
<dbReference type="InterPro" id="IPR017937">
    <property type="entry name" value="Thioredoxin_CS"/>
</dbReference>
<dbReference type="InterPro" id="IPR013766">
    <property type="entry name" value="Thioredoxin_domain"/>
</dbReference>
<dbReference type="InterPro" id="IPR050553">
    <property type="entry name" value="Thioredoxin_ResA/DsbE_sf"/>
</dbReference>
<dbReference type="NCBIfam" id="TIGR00385">
    <property type="entry name" value="dsbE"/>
    <property type="match status" value="1"/>
</dbReference>
<dbReference type="PANTHER" id="PTHR42852">
    <property type="entry name" value="THIOL:DISULFIDE INTERCHANGE PROTEIN DSBE"/>
    <property type="match status" value="1"/>
</dbReference>
<dbReference type="PANTHER" id="PTHR42852:SF6">
    <property type="entry name" value="THIOL:DISULFIDE INTERCHANGE PROTEIN DSBE"/>
    <property type="match status" value="1"/>
</dbReference>
<dbReference type="Pfam" id="PF08534">
    <property type="entry name" value="Redoxin"/>
    <property type="match status" value="1"/>
</dbReference>
<dbReference type="SUPFAM" id="SSF52833">
    <property type="entry name" value="Thioredoxin-like"/>
    <property type="match status" value="1"/>
</dbReference>
<dbReference type="PROSITE" id="PS00194">
    <property type="entry name" value="THIOREDOXIN_1"/>
    <property type="match status" value="1"/>
</dbReference>
<dbReference type="PROSITE" id="PS51352">
    <property type="entry name" value="THIOREDOXIN_2"/>
    <property type="match status" value="1"/>
</dbReference>
<keyword id="KW-0002">3D-structure</keyword>
<keyword id="KW-0997">Cell inner membrane</keyword>
<keyword id="KW-1003">Cell membrane</keyword>
<keyword id="KW-0201">Cytochrome c-type biogenesis</keyword>
<keyword id="KW-1015">Disulfide bond</keyword>
<keyword id="KW-0472">Membrane</keyword>
<keyword id="KW-0676">Redox-active center</keyword>
<keyword id="KW-1185">Reference proteome</keyword>
<keyword id="KW-0812">Transmembrane</keyword>
<keyword id="KW-1133">Transmembrane helix</keyword>